<accession>B2JI49</accession>
<gene>
    <name evidence="1" type="primary">rplR</name>
    <name type="ordered locus">Bphy_2823</name>
</gene>
<keyword id="KW-1185">Reference proteome</keyword>
<keyword id="KW-0687">Ribonucleoprotein</keyword>
<keyword id="KW-0689">Ribosomal protein</keyword>
<keyword id="KW-0694">RNA-binding</keyword>
<keyword id="KW-0699">rRNA-binding</keyword>
<feature type="chain" id="PRO_1000142633" description="Large ribosomal subunit protein uL18">
    <location>
        <begin position="1"/>
        <end position="121"/>
    </location>
</feature>
<dbReference type="EMBL" id="CP001043">
    <property type="protein sequence ID" value="ACC71995.1"/>
    <property type="molecule type" value="Genomic_DNA"/>
</dbReference>
<dbReference type="RefSeq" id="WP_012402184.1">
    <property type="nucleotide sequence ID" value="NC_010622.1"/>
</dbReference>
<dbReference type="SMR" id="B2JI49"/>
<dbReference type="STRING" id="391038.Bphy_2823"/>
<dbReference type="KEGG" id="bph:Bphy_2823"/>
<dbReference type="eggNOG" id="COG0256">
    <property type="taxonomic scope" value="Bacteria"/>
</dbReference>
<dbReference type="HOGENOM" id="CLU_098841_0_1_4"/>
<dbReference type="OrthoDB" id="9810939at2"/>
<dbReference type="Proteomes" id="UP000001192">
    <property type="component" value="Chromosome 1"/>
</dbReference>
<dbReference type="GO" id="GO:0022625">
    <property type="term" value="C:cytosolic large ribosomal subunit"/>
    <property type="evidence" value="ECO:0007669"/>
    <property type="project" value="TreeGrafter"/>
</dbReference>
<dbReference type="GO" id="GO:0008097">
    <property type="term" value="F:5S rRNA binding"/>
    <property type="evidence" value="ECO:0007669"/>
    <property type="project" value="TreeGrafter"/>
</dbReference>
<dbReference type="GO" id="GO:0003735">
    <property type="term" value="F:structural constituent of ribosome"/>
    <property type="evidence" value="ECO:0007669"/>
    <property type="project" value="InterPro"/>
</dbReference>
<dbReference type="GO" id="GO:0006412">
    <property type="term" value="P:translation"/>
    <property type="evidence" value="ECO:0007669"/>
    <property type="project" value="UniProtKB-UniRule"/>
</dbReference>
<dbReference type="CDD" id="cd00432">
    <property type="entry name" value="Ribosomal_L18_L5e"/>
    <property type="match status" value="1"/>
</dbReference>
<dbReference type="FunFam" id="3.30.420.100:FF:000001">
    <property type="entry name" value="50S ribosomal protein L18"/>
    <property type="match status" value="1"/>
</dbReference>
<dbReference type="Gene3D" id="3.30.420.100">
    <property type="match status" value="1"/>
</dbReference>
<dbReference type="HAMAP" id="MF_01337_B">
    <property type="entry name" value="Ribosomal_uL18_B"/>
    <property type="match status" value="1"/>
</dbReference>
<dbReference type="InterPro" id="IPR004389">
    <property type="entry name" value="Ribosomal_uL18_bac-type"/>
</dbReference>
<dbReference type="InterPro" id="IPR005484">
    <property type="entry name" value="Ribosomal_uL18_bac/euk"/>
</dbReference>
<dbReference type="NCBIfam" id="TIGR00060">
    <property type="entry name" value="L18_bact"/>
    <property type="match status" value="1"/>
</dbReference>
<dbReference type="PANTHER" id="PTHR12899">
    <property type="entry name" value="39S RIBOSOMAL PROTEIN L18, MITOCHONDRIAL"/>
    <property type="match status" value="1"/>
</dbReference>
<dbReference type="PANTHER" id="PTHR12899:SF3">
    <property type="entry name" value="LARGE RIBOSOMAL SUBUNIT PROTEIN UL18M"/>
    <property type="match status" value="1"/>
</dbReference>
<dbReference type="Pfam" id="PF00861">
    <property type="entry name" value="Ribosomal_L18p"/>
    <property type="match status" value="1"/>
</dbReference>
<dbReference type="SUPFAM" id="SSF53137">
    <property type="entry name" value="Translational machinery components"/>
    <property type="match status" value="1"/>
</dbReference>
<sequence>MDKTQSRLRRARQTRIKIAELQVARLAVHRTNTHIYAQVFSPCGTKVLASASTLEAEVRAQLADKSGKGGNVAAATLIGKRIAEKAKAAGIESVAFDRSGFRYHGRVKALADAAREAGLKF</sequence>
<evidence type="ECO:0000255" key="1">
    <source>
        <dbReference type="HAMAP-Rule" id="MF_01337"/>
    </source>
</evidence>
<evidence type="ECO:0000305" key="2"/>
<protein>
    <recommendedName>
        <fullName evidence="1">Large ribosomal subunit protein uL18</fullName>
    </recommendedName>
    <alternativeName>
        <fullName evidence="2">50S ribosomal protein L18</fullName>
    </alternativeName>
</protein>
<reference key="1">
    <citation type="journal article" date="2014" name="Stand. Genomic Sci.">
        <title>Complete genome sequence of Burkholderia phymatum STM815(T), a broad host range and efficient nitrogen-fixing symbiont of Mimosa species.</title>
        <authorList>
            <person name="Moulin L."/>
            <person name="Klonowska A."/>
            <person name="Caroline B."/>
            <person name="Booth K."/>
            <person name="Vriezen J.A."/>
            <person name="Melkonian R."/>
            <person name="James E.K."/>
            <person name="Young J.P."/>
            <person name="Bena G."/>
            <person name="Hauser L."/>
            <person name="Land M."/>
            <person name="Kyrpides N."/>
            <person name="Bruce D."/>
            <person name="Chain P."/>
            <person name="Copeland A."/>
            <person name="Pitluck S."/>
            <person name="Woyke T."/>
            <person name="Lizotte-Waniewski M."/>
            <person name="Bristow J."/>
            <person name="Riley M."/>
        </authorList>
    </citation>
    <scope>NUCLEOTIDE SEQUENCE [LARGE SCALE GENOMIC DNA]</scope>
    <source>
        <strain>DSM 17167 / CIP 108236 / LMG 21445 / STM815</strain>
    </source>
</reference>
<name>RL18_PARP8</name>
<organism>
    <name type="scientific">Paraburkholderia phymatum (strain DSM 17167 / CIP 108236 / LMG 21445 / STM815)</name>
    <name type="common">Burkholderia phymatum</name>
    <dbReference type="NCBI Taxonomy" id="391038"/>
    <lineage>
        <taxon>Bacteria</taxon>
        <taxon>Pseudomonadati</taxon>
        <taxon>Pseudomonadota</taxon>
        <taxon>Betaproteobacteria</taxon>
        <taxon>Burkholderiales</taxon>
        <taxon>Burkholderiaceae</taxon>
        <taxon>Paraburkholderia</taxon>
    </lineage>
</organism>
<comment type="function">
    <text evidence="1">This is one of the proteins that bind and probably mediate the attachment of the 5S RNA into the large ribosomal subunit, where it forms part of the central protuberance.</text>
</comment>
<comment type="subunit">
    <text evidence="1">Part of the 50S ribosomal subunit; part of the 5S rRNA/L5/L18/L25 subcomplex. Contacts the 5S and 23S rRNAs.</text>
</comment>
<comment type="similarity">
    <text evidence="1">Belongs to the universal ribosomal protein uL18 family.</text>
</comment>
<proteinExistence type="inferred from homology"/>